<name>Y2536_LISMF</name>
<protein>
    <recommendedName>
        <fullName>Probable tautomerase LMOf2365_2536</fullName>
        <ecNumber>5.3.2.-</ecNumber>
    </recommendedName>
</protein>
<accession>Q71WL5</accession>
<comment type="similarity">
    <text evidence="2">Belongs to the 4-oxalocrotonate tautomerase family.</text>
</comment>
<organism>
    <name type="scientific">Listeria monocytogenes serotype 4b (strain F2365)</name>
    <dbReference type="NCBI Taxonomy" id="265669"/>
    <lineage>
        <taxon>Bacteria</taxon>
        <taxon>Bacillati</taxon>
        <taxon>Bacillota</taxon>
        <taxon>Bacilli</taxon>
        <taxon>Bacillales</taxon>
        <taxon>Listeriaceae</taxon>
        <taxon>Listeria</taxon>
    </lineage>
</organism>
<dbReference type="EC" id="5.3.2.-"/>
<dbReference type="EMBL" id="AE017262">
    <property type="protein sequence ID" value="AAT05301.1"/>
    <property type="molecule type" value="Genomic_DNA"/>
</dbReference>
<dbReference type="RefSeq" id="WP_003726107.1">
    <property type="nucleotide sequence ID" value="NC_002973.6"/>
</dbReference>
<dbReference type="SMR" id="Q71WL5"/>
<dbReference type="KEGG" id="lmf:LMOf2365_2536"/>
<dbReference type="HOGENOM" id="CLU_148073_5_1_9"/>
<dbReference type="GO" id="GO:0016853">
    <property type="term" value="F:isomerase activity"/>
    <property type="evidence" value="ECO:0007669"/>
    <property type="project" value="UniProtKB-KW"/>
</dbReference>
<dbReference type="CDD" id="cd00491">
    <property type="entry name" value="4Oxalocrotonate_Tautomerase"/>
    <property type="match status" value="1"/>
</dbReference>
<dbReference type="FunFam" id="3.30.429.10:FF:000002">
    <property type="entry name" value="Tautomerase"/>
    <property type="match status" value="1"/>
</dbReference>
<dbReference type="Gene3D" id="3.30.429.10">
    <property type="entry name" value="Macrophage Migration Inhibitory Factor"/>
    <property type="match status" value="1"/>
</dbReference>
<dbReference type="InterPro" id="IPR018191">
    <property type="entry name" value="4-OT"/>
</dbReference>
<dbReference type="InterPro" id="IPR004370">
    <property type="entry name" value="4-OT-like_dom"/>
</dbReference>
<dbReference type="InterPro" id="IPR014347">
    <property type="entry name" value="Tautomerase/MIF_sf"/>
</dbReference>
<dbReference type="NCBIfam" id="NF002571">
    <property type="entry name" value="PRK02220.1"/>
    <property type="match status" value="1"/>
</dbReference>
<dbReference type="NCBIfam" id="TIGR00013">
    <property type="entry name" value="taut"/>
    <property type="match status" value="1"/>
</dbReference>
<dbReference type="PANTHER" id="PTHR35530:SF1">
    <property type="entry name" value="2-HYDROXYMUCONATE TAUTOMERASE"/>
    <property type="match status" value="1"/>
</dbReference>
<dbReference type="PANTHER" id="PTHR35530">
    <property type="entry name" value="TAUTOMERASE-RELATED"/>
    <property type="match status" value="1"/>
</dbReference>
<dbReference type="Pfam" id="PF01361">
    <property type="entry name" value="Tautomerase"/>
    <property type="match status" value="1"/>
</dbReference>
<dbReference type="SUPFAM" id="SSF55331">
    <property type="entry name" value="Tautomerase/MIF"/>
    <property type="match status" value="1"/>
</dbReference>
<proteinExistence type="inferred from homology"/>
<feature type="initiator methionine" description="Removed" evidence="1">
    <location>
        <position position="1"/>
    </location>
</feature>
<feature type="chain" id="PRO_0000209535" description="Probable tautomerase LMOf2365_2536">
    <location>
        <begin position="2"/>
        <end position="61"/>
    </location>
</feature>
<feature type="active site" description="Proton acceptor; via imino nitrogen" evidence="1">
    <location>
        <position position="2"/>
    </location>
</feature>
<keyword id="KW-0413">Isomerase</keyword>
<gene>
    <name type="ordered locus">LMOf2365_2536</name>
</gene>
<reference key="1">
    <citation type="journal article" date="2004" name="Nucleic Acids Res.">
        <title>Whole genome comparisons of serotype 4b and 1/2a strains of the food-borne pathogen Listeria monocytogenes reveal new insights into the core genome components of this species.</title>
        <authorList>
            <person name="Nelson K.E."/>
            <person name="Fouts D.E."/>
            <person name="Mongodin E.F."/>
            <person name="Ravel J."/>
            <person name="DeBoy R.T."/>
            <person name="Kolonay J.F."/>
            <person name="Rasko D.A."/>
            <person name="Angiuoli S.V."/>
            <person name="Gill S.R."/>
            <person name="Paulsen I.T."/>
            <person name="Peterson J.D."/>
            <person name="White O."/>
            <person name="Nelson W.C."/>
            <person name="Nierman W.C."/>
            <person name="Beanan M.J."/>
            <person name="Brinkac L.M."/>
            <person name="Daugherty S.C."/>
            <person name="Dodson R.J."/>
            <person name="Durkin A.S."/>
            <person name="Madupu R."/>
            <person name="Haft D.H."/>
            <person name="Selengut J."/>
            <person name="Van Aken S.E."/>
            <person name="Khouri H.M."/>
            <person name="Fedorova N."/>
            <person name="Forberger H.A."/>
            <person name="Tran B."/>
            <person name="Kathariou S."/>
            <person name="Wonderling L.D."/>
            <person name="Uhlich G.A."/>
            <person name="Bayles D.O."/>
            <person name="Luchansky J.B."/>
            <person name="Fraser C.M."/>
        </authorList>
    </citation>
    <scope>NUCLEOTIDE SEQUENCE [LARGE SCALE GENOMIC DNA]</scope>
    <source>
        <strain>F2365</strain>
    </source>
</reference>
<sequence>MPFVTIQFLEGRTDDQKKALVSEVTEVVAKNLKAPKENIHVILEEMKKTDYGVGGVRKSDI</sequence>
<evidence type="ECO:0000250" key="1"/>
<evidence type="ECO:0000305" key="2"/>